<keyword id="KW-0002">3D-structure</keyword>
<keyword id="KW-0227">DNA damage</keyword>
<keyword id="KW-0234">DNA repair</keyword>
<keyword id="KW-0235">DNA replication</keyword>
<keyword id="KW-0237">DNA synthesis</keyword>
<keyword id="KW-0238">DNA-binding</keyword>
<keyword id="KW-0239">DNA-directed DNA polymerase</keyword>
<keyword id="KW-0460">Magnesium</keyword>
<keyword id="KW-0479">Metal-binding</keyword>
<keyword id="KW-0515">Mutator protein</keyword>
<keyword id="KW-0548">Nucleotidyltransferase</keyword>
<keyword id="KW-0539">Nucleus</keyword>
<keyword id="KW-1185">Reference proteome</keyword>
<keyword id="KW-0808">Transferase</keyword>
<keyword id="KW-0862">Zinc</keyword>
<keyword id="KW-0863">Zinc-finger</keyword>
<sequence length="632" mass="71515">MSKFTWKELIQLGSPSKAYESSLACIAHIDMNAFFAQVEQMRCGLSKEDPVVCVQWNSIIAVSYAARKYGISRMDTIQEALKKCSNLIPIHTAVFKKGEDFWQYHDGCGSWVQDPAKQISVEDHKVSLEPYRRESRKALKIFKSACDLVERASIDEVFLDLGRICFNMLMFDNEYELTGDLKLKDALSNIREAFIGGNYDINSHLPLIPEKIKSLKFEGDVFNPEGRDLITDWDDVILALGSQVCKGIRDSIKDILGYTTSCGLSSTKNVCKLASNYKKPDAQTIVKNDCLLDFLDCGKFEITSFWTLGGVLGKELIDVLDLPHENSIKHIRETWPDNAGQLKEFLDAKVKQSDYDRSTSNIDPLKTADLAEKLFKLSRGRYGLPLSSRPVVKSMMSNKNLRGKSCNSIVDCISWLEVFCAELTSRIQDLEQEYNKIVIPRTVSISLKTKSYEVYRKSGPVAYKGINFQSHELLKVGIKFVTDLDIKGKNKSYYPLTKLSMTITNFDIIDLQKTVVDMFGNQVHTFKSSAGKEDEEKTTSSKADEKTPKLECCKYQVTFTDQKALQEHADYHLALKLSEGLNGAEESSKNLSFGEKRLLFSRKRPNSQHTATPQKKQVTSSKNILSFFTRKK</sequence>
<name>POLH_YEAST</name>
<evidence type="ECO:0000255" key="1">
    <source>
        <dbReference type="PROSITE-ProRule" id="PRU00216"/>
    </source>
</evidence>
<evidence type="ECO:0000255" key="2">
    <source>
        <dbReference type="PROSITE-ProRule" id="PRU01255"/>
    </source>
</evidence>
<evidence type="ECO:0000256" key="3">
    <source>
        <dbReference type="SAM" id="MobiDB-lite"/>
    </source>
</evidence>
<evidence type="ECO:0000269" key="4">
    <source>
    </source>
</evidence>
<evidence type="ECO:0000269" key="5">
    <source>
    </source>
</evidence>
<evidence type="ECO:0000269" key="6">
    <source>
    </source>
</evidence>
<evidence type="ECO:0000269" key="7">
    <source>
    </source>
</evidence>
<evidence type="ECO:0000269" key="8">
    <source>
    </source>
</evidence>
<evidence type="ECO:0000269" key="9">
    <source>
    </source>
</evidence>
<evidence type="ECO:0000269" key="10">
    <source>
    </source>
</evidence>
<evidence type="ECO:0000269" key="11">
    <source>
    </source>
</evidence>
<evidence type="ECO:0000269" key="12">
    <source>
    </source>
</evidence>
<evidence type="ECO:0000269" key="13">
    <source>
    </source>
</evidence>
<evidence type="ECO:0000269" key="14">
    <source>
    </source>
</evidence>
<evidence type="ECO:0000269" key="15">
    <source>
    </source>
</evidence>
<evidence type="ECO:0000269" key="16">
    <source>
    </source>
</evidence>
<evidence type="ECO:0000269" key="17">
    <source>
    </source>
</evidence>
<evidence type="ECO:0000269" key="18">
    <source>
    </source>
</evidence>
<evidence type="ECO:0000269" key="19">
    <source>
    </source>
</evidence>
<evidence type="ECO:0000269" key="20">
    <source>
    </source>
</evidence>
<evidence type="ECO:0000269" key="21">
    <source>
    </source>
</evidence>
<evidence type="ECO:0000269" key="22">
    <source>
    </source>
</evidence>
<evidence type="ECO:0000269" key="23">
    <source>
    </source>
</evidence>
<evidence type="ECO:0000269" key="24">
    <source>
    </source>
</evidence>
<evidence type="ECO:0000269" key="25">
    <source>
    </source>
</evidence>
<evidence type="ECO:0000269" key="26">
    <source>
    </source>
</evidence>
<evidence type="ECO:0000269" key="27">
    <source>
    </source>
</evidence>
<evidence type="ECO:0000269" key="28">
    <source>
    </source>
</evidence>
<evidence type="ECO:0000269" key="29">
    <source>
    </source>
</evidence>
<evidence type="ECO:0000269" key="30">
    <source>
    </source>
</evidence>
<evidence type="ECO:0000269" key="31">
    <source>
    </source>
</evidence>
<evidence type="ECO:0000269" key="32">
    <source>
    </source>
</evidence>
<evidence type="ECO:0000269" key="33">
    <source>
    </source>
</evidence>
<evidence type="ECO:0000269" key="34">
    <source>
    </source>
</evidence>
<evidence type="ECO:0000269" key="35">
    <source>
    </source>
</evidence>
<evidence type="ECO:0000269" key="36">
    <source>
    </source>
</evidence>
<evidence type="ECO:0000269" key="37">
    <source>
    </source>
</evidence>
<evidence type="ECO:0000269" key="38">
    <source>
    </source>
</evidence>
<evidence type="ECO:0000269" key="39">
    <source>
    </source>
</evidence>
<evidence type="ECO:0000269" key="40">
    <source>
    </source>
</evidence>
<evidence type="ECO:0000305" key="41"/>
<evidence type="ECO:0007829" key="42">
    <source>
        <dbReference type="PDB" id="1JIH"/>
    </source>
</evidence>
<evidence type="ECO:0007829" key="43">
    <source>
        <dbReference type="PDB" id="2R8K"/>
    </source>
</evidence>
<evidence type="ECO:0007829" key="44">
    <source>
        <dbReference type="PDB" id="2WTF"/>
    </source>
</evidence>
<evidence type="ECO:0007829" key="45">
    <source>
        <dbReference type="PDB" id="3MFH"/>
    </source>
</evidence>
<evidence type="ECO:0007829" key="46">
    <source>
        <dbReference type="PDB" id="3MFI"/>
    </source>
</evidence>
<evidence type="ECO:0007829" key="47">
    <source>
        <dbReference type="PDB" id="3OHA"/>
    </source>
</evidence>
<evidence type="ECO:0007829" key="48">
    <source>
        <dbReference type="PDB" id="3OHB"/>
    </source>
</evidence>
<reference key="1">
    <citation type="journal article" date="1997" name="Nature">
        <title>The nucleotide sequence of Saccharomyces cerevisiae chromosome IV.</title>
        <authorList>
            <person name="Jacq C."/>
            <person name="Alt-Moerbe J."/>
            <person name="Andre B."/>
            <person name="Arnold W."/>
            <person name="Bahr A."/>
            <person name="Ballesta J.P.G."/>
            <person name="Bargues M."/>
            <person name="Baron L."/>
            <person name="Becker A."/>
            <person name="Biteau N."/>
            <person name="Bloecker H."/>
            <person name="Blugeon C."/>
            <person name="Boskovic J."/>
            <person name="Brandt P."/>
            <person name="Brueckner M."/>
            <person name="Buitrago M.J."/>
            <person name="Coster F."/>
            <person name="Delaveau T."/>
            <person name="del Rey F."/>
            <person name="Dujon B."/>
            <person name="Eide L.G."/>
            <person name="Garcia-Cantalejo J.M."/>
            <person name="Goffeau A."/>
            <person name="Gomez-Peris A."/>
            <person name="Granotier C."/>
            <person name="Hanemann V."/>
            <person name="Hankeln T."/>
            <person name="Hoheisel J.D."/>
            <person name="Jaeger W."/>
            <person name="Jimenez A."/>
            <person name="Jonniaux J.-L."/>
            <person name="Kraemer C."/>
            <person name="Kuester H."/>
            <person name="Laamanen P."/>
            <person name="Legros Y."/>
            <person name="Louis E.J."/>
            <person name="Moeller-Rieker S."/>
            <person name="Monnet A."/>
            <person name="Moro M."/>
            <person name="Mueller-Auer S."/>
            <person name="Nussbaumer B."/>
            <person name="Paricio N."/>
            <person name="Paulin L."/>
            <person name="Perea J."/>
            <person name="Perez-Alonso M."/>
            <person name="Perez-Ortin J.E."/>
            <person name="Pohl T.M."/>
            <person name="Prydz H."/>
            <person name="Purnelle B."/>
            <person name="Rasmussen S.W."/>
            <person name="Remacha M.A."/>
            <person name="Revuelta J.L."/>
            <person name="Rieger M."/>
            <person name="Salom D."/>
            <person name="Saluz H.P."/>
            <person name="Saiz J.E."/>
            <person name="Saren A.-M."/>
            <person name="Schaefer M."/>
            <person name="Scharfe M."/>
            <person name="Schmidt E.R."/>
            <person name="Schneider C."/>
            <person name="Scholler P."/>
            <person name="Schwarz S."/>
            <person name="Soler-Mira A."/>
            <person name="Urrestarazu L.A."/>
            <person name="Verhasselt P."/>
            <person name="Vissers S."/>
            <person name="Voet M."/>
            <person name="Volckaert G."/>
            <person name="Wagner G."/>
            <person name="Wambutt R."/>
            <person name="Wedler E."/>
            <person name="Wedler H."/>
            <person name="Woelfl S."/>
            <person name="Harris D.E."/>
            <person name="Bowman S."/>
            <person name="Brown D."/>
            <person name="Churcher C.M."/>
            <person name="Connor R."/>
            <person name="Dedman K."/>
            <person name="Gentles S."/>
            <person name="Hamlin N."/>
            <person name="Hunt S."/>
            <person name="Jones L."/>
            <person name="McDonald S."/>
            <person name="Murphy L.D."/>
            <person name="Niblett D."/>
            <person name="Odell C."/>
            <person name="Oliver K."/>
            <person name="Rajandream M.A."/>
            <person name="Richards C."/>
            <person name="Shore L."/>
            <person name="Walsh S.V."/>
            <person name="Barrell B.G."/>
            <person name="Dietrich F.S."/>
            <person name="Mulligan J.T."/>
            <person name="Allen E."/>
            <person name="Araujo R."/>
            <person name="Aviles E."/>
            <person name="Berno A."/>
            <person name="Carpenter J."/>
            <person name="Chen E."/>
            <person name="Cherry J.M."/>
            <person name="Chung E."/>
            <person name="Duncan M."/>
            <person name="Hunicke-Smith S."/>
            <person name="Hyman R.W."/>
            <person name="Komp C."/>
            <person name="Lashkari D."/>
            <person name="Lew H."/>
            <person name="Lin D."/>
            <person name="Mosedale D."/>
            <person name="Nakahara K."/>
            <person name="Namath A."/>
            <person name="Oefner P."/>
            <person name="Oh C."/>
            <person name="Petel F.X."/>
            <person name="Roberts D."/>
            <person name="Schramm S."/>
            <person name="Schroeder M."/>
            <person name="Shogren T."/>
            <person name="Shroff N."/>
            <person name="Winant A."/>
            <person name="Yelton M.A."/>
            <person name="Botstein D."/>
            <person name="Davis R.W."/>
            <person name="Johnston M."/>
            <person name="Andrews S."/>
            <person name="Brinkman R."/>
            <person name="Cooper J."/>
            <person name="Ding H."/>
            <person name="Du Z."/>
            <person name="Favello A."/>
            <person name="Fulton L."/>
            <person name="Gattung S."/>
            <person name="Greco T."/>
            <person name="Hallsworth K."/>
            <person name="Hawkins J."/>
            <person name="Hillier L.W."/>
            <person name="Jier M."/>
            <person name="Johnson D."/>
            <person name="Johnston L."/>
            <person name="Kirsten J."/>
            <person name="Kucaba T."/>
            <person name="Langston Y."/>
            <person name="Latreille P."/>
            <person name="Le T."/>
            <person name="Mardis E."/>
            <person name="Menezes S."/>
            <person name="Miller N."/>
            <person name="Nhan M."/>
            <person name="Pauley A."/>
            <person name="Peluso D."/>
            <person name="Rifkin L."/>
            <person name="Riles L."/>
            <person name="Taich A."/>
            <person name="Trevaskis E."/>
            <person name="Vignati D."/>
            <person name="Wilcox L."/>
            <person name="Wohldman P."/>
            <person name="Vaudin M."/>
            <person name="Wilson R."/>
            <person name="Waterston R."/>
            <person name="Albermann K."/>
            <person name="Hani J."/>
            <person name="Heumann K."/>
            <person name="Kleine K."/>
            <person name="Mewes H.-W."/>
            <person name="Zollner A."/>
            <person name="Zaccaria P."/>
        </authorList>
    </citation>
    <scope>NUCLEOTIDE SEQUENCE [LARGE SCALE GENOMIC DNA]</scope>
    <source>
        <strain>ATCC 204508 / S288c</strain>
    </source>
</reference>
<reference key="2">
    <citation type="journal article" date="2014" name="G3 (Bethesda)">
        <title>The reference genome sequence of Saccharomyces cerevisiae: Then and now.</title>
        <authorList>
            <person name="Engel S.R."/>
            <person name="Dietrich F.S."/>
            <person name="Fisk D.G."/>
            <person name="Binkley G."/>
            <person name="Balakrishnan R."/>
            <person name="Costanzo M.C."/>
            <person name="Dwight S.S."/>
            <person name="Hitz B.C."/>
            <person name="Karra K."/>
            <person name="Nash R.S."/>
            <person name="Weng S."/>
            <person name="Wong E.D."/>
            <person name="Lloyd P."/>
            <person name="Skrzypek M.S."/>
            <person name="Miyasato S.R."/>
            <person name="Simison M."/>
            <person name="Cherry J.M."/>
        </authorList>
    </citation>
    <scope>GENOME REANNOTATION</scope>
    <source>
        <strain>ATCC 204508 / S288c</strain>
    </source>
</reference>
<reference key="3">
    <citation type="journal article" date="1997" name="Genetics">
        <title>The Saccharomyces cerevisiae RAD30 gene, a homologue of Escherichia coli dinB and umuC, is DNA damage inducible and functions in a novel error-free postreplication repair mechanism.</title>
        <authorList>
            <person name="McDonald J.P."/>
            <person name="Levine A.S."/>
            <person name="Woodgate R."/>
        </authorList>
    </citation>
    <scope>FUNCTION</scope>
    <scope>INDUCTION</scope>
</reference>
<reference key="4">
    <citation type="journal article" date="1999" name="J. Biol. Chem.">
        <title>Requirement of DNA polymerase activity of yeast Rad30 protein for its biological function.</title>
        <authorList>
            <person name="Johnson R.E."/>
            <person name="Prakash S."/>
            <person name="Prakash L."/>
        </authorList>
    </citation>
    <scope>FUNCTION</scope>
    <scope>MUTAGENESIS OF 155-ASP-GLU-156</scope>
</reference>
<reference key="5">
    <citation type="journal article" date="1999" name="J. Biol. Chem.">
        <title>Fidelity and processivity of Saccharomyces cerevisiae DNA polymerase eta.</title>
        <authorList>
            <person name="Washington M.T."/>
            <person name="Johnson R.E."/>
            <person name="Prakash S."/>
            <person name="Prakash L."/>
        </authorList>
    </citation>
    <scope>FUNCTION</scope>
</reference>
<reference key="6">
    <citation type="journal article" date="1999" name="Science">
        <title>Efficient bypass of a thymine-thymine dimer by yeast DNA polymerase, Poleta.</title>
        <authorList>
            <person name="Johnson R.E."/>
            <person name="Prakash S."/>
            <person name="Prakash L."/>
        </authorList>
    </citation>
    <scope>FUNCTION</scope>
</reference>
<reference key="7">
    <citation type="journal article" date="2000" name="Genetics">
        <title>The Saccharomyces cerevisiae RAD6 group is composed of an error-prone and two error-free postreplication repair pathways.</title>
        <authorList>
            <person name="Xiao W."/>
            <person name="Chow B.L."/>
            <person name="Broomfield S."/>
            <person name="Hanna M."/>
        </authorList>
    </citation>
    <scope>FUNCTION</scope>
</reference>
<reference key="8">
    <citation type="journal article" date="2000" name="J. Biol. Chem.">
        <title>Specificity of DNA lesion bypass by the yeast DNA polymerase eta.</title>
        <authorList>
            <person name="Yuan F."/>
            <person name="Zhang Y."/>
            <person name="Rajpal D.K."/>
            <person name="Wu X."/>
            <person name="Guo D."/>
            <person name="Wang M."/>
            <person name="Taylor J.-S."/>
            <person name="Wang Z."/>
        </authorList>
    </citation>
    <scope>FUNCTION</scope>
</reference>
<reference key="9">
    <citation type="journal article" date="2000" name="Mol. Cell. Biol.">
        <title>Replication past O(6)-methylguanine by yeast and human DNA polymerase eta.</title>
        <authorList>
            <person name="Haracska L."/>
            <person name="Prakash S."/>
            <person name="Prakash L."/>
        </authorList>
    </citation>
    <scope>FUNCTION</scope>
</reference>
<reference key="10">
    <citation type="journal article" date="2000" name="Nat. Genet.">
        <title>Efficient and accurate replication in the presence of 7,8-dihydro-8-oxoguanine by DNA polymerase eta.</title>
        <authorList>
            <person name="Haracska L."/>
            <person name="Yu S.-L."/>
            <person name="Johnson R.E."/>
            <person name="Prakash L."/>
            <person name="Prakash S."/>
        </authorList>
    </citation>
    <scope>FUNCTION</scope>
</reference>
<reference key="11">
    <citation type="journal article" date="2000" name="Proc. Natl. Acad. Sci. U.S.A.">
        <title>Accuracy of thymine-thymine dimer bypass by Saccharomyces cerevisiae DNA polymerase eta.</title>
        <authorList>
            <person name="Washington M.T."/>
            <person name="Johnson R.E."/>
            <person name="Prakash S."/>
            <person name="Prakash L."/>
        </authorList>
    </citation>
    <scope>FUNCTION</scope>
</reference>
<reference key="12">
    <citation type="journal article" date="2001" name="J. Biol. Chem.">
        <title>Translesion DNA synthesis by yeast DNA polymerase eta on templates containing N2-guanine adducts of 1,3-butadiene metabolites.</title>
        <authorList>
            <person name="Minko I.G."/>
            <person name="Washington M.T."/>
            <person name="Prakash L."/>
            <person name="Prakash S."/>
            <person name="Lloyd R.S."/>
        </authorList>
    </citation>
    <scope>FUNCTION</scope>
</reference>
<reference key="13">
    <citation type="journal article" date="2001" name="Mol. Cell">
        <title>Interaction with PCNA is essential for yeast DNA polymerase eta function.</title>
        <authorList>
            <person name="Haracska L."/>
            <person name="Kondratick C.M."/>
            <person name="Unk I."/>
            <person name="Prakash S."/>
            <person name="Prakash L."/>
        </authorList>
    </citation>
    <scope>FUNCTION</scope>
    <scope>DOMAIN</scope>
    <scope>INTERACTION WITH POL30</scope>
    <scope>MUTAGENESIS OF 627-PHE-PHE-628</scope>
</reference>
<reference key="14">
    <citation type="journal article" date="2001" name="Mol. Cell. Biol.">
        <title>Requirement of DNA polymerase eta for error-free bypass of UV-induced CC and TC photoproducts.</title>
        <authorList>
            <person name="Yu S.-L."/>
            <person name="Johnson R.E."/>
            <person name="Prakash S."/>
            <person name="Prakash L."/>
        </authorList>
    </citation>
    <scope>FUNCTION</scope>
</reference>
<reference key="15">
    <citation type="journal article" date="2001" name="Mol. Cell. Biol.">
        <title>Acidic residues critical for the activity and biological function of yeast DNA polymerase eta.</title>
        <authorList>
            <person name="Kondratick C.M."/>
            <person name="Washington M.T."/>
            <person name="Prakash S."/>
            <person name="Prakash L."/>
        </authorList>
    </citation>
    <scope>FUNCTION</scope>
    <scope>DOMAIN</scope>
    <scope>MUTAGENESIS OF ASP-30; GLU-39; ASP-155 AND GLU-156</scope>
</reference>
<reference key="16">
    <citation type="journal article" date="2001" name="J. Biol. Chem.">
        <title>Mismatch extension ability of yeast and human DNA polymerase eta.</title>
        <authorList>
            <person name="Washington M.T."/>
            <person name="Johnson R.E."/>
            <person name="Prakash S."/>
            <person name="Prakash L."/>
        </authorList>
    </citation>
    <scope>FUNCTION</scope>
</reference>
<reference key="17">
    <citation type="journal article" date="2002" name="EMBO J.">
        <title>Lesion bypass in yeast cells: Pol eta participates in a multi-DNA polymerase process.</title>
        <authorList>
            <person name="Bresson A."/>
            <person name="Fuchs R.P."/>
        </authorList>
    </citation>
    <scope>FUNCTION</scope>
</reference>
<reference key="18">
    <citation type="journal article" date="2002" name="Nucleic Acids Res.">
        <title>UV-induced T--&gt;C transition at a TT photoproduct site is dependent on Saccharomyces cerevisiae polymerase eta in vivo.</title>
        <authorList>
            <person name="Zhang H."/>
            <person name="Siede W."/>
        </authorList>
    </citation>
    <scope>FUNCTION</scope>
</reference>
<reference key="19">
    <citation type="journal article" date="2003" name="Biochemistry">
        <title>Yeast pol eta holds a cis-syn thymine dimer loosely in the active site during elongation opposite the 3'-T of the dimer, but tightly opposite the 5'-T.</title>
        <authorList>
            <person name="Sun L."/>
            <person name="Zhang K."/>
            <person name="Zhou L."/>
            <person name="Hohler P."/>
            <person name="Kool E.T."/>
            <person name="Yuan F."/>
            <person name="Wang Z."/>
            <person name="Taylor J.-S."/>
        </authorList>
    </citation>
    <scope>FUNCTION</scope>
</reference>
<reference key="20">
    <citation type="journal article" date="2003" name="Mol. Cell. Biol.">
        <title>Deoxynucleotide triphosphate binding mode conserved in Y family DNA polymerases.</title>
        <authorList>
            <person name="Johnson R.E."/>
            <person name="Trincao J."/>
            <person name="Aggarwal A.K."/>
            <person name="Prakash S."/>
            <person name="Prakash L."/>
        </authorList>
    </citation>
    <scope>FUNCTION</scope>
    <scope>MUTAGENESIS OF TYR-64; ARG-67 AND LYS-279</scope>
</reference>
<reference key="21">
    <citation type="journal article" date="2003" name="Nature">
        <title>Global analysis of protein localization in budding yeast.</title>
        <authorList>
            <person name="Huh W.-K."/>
            <person name="Falvo J.V."/>
            <person name="Gerke L.C."/>
            <person name="Carroll A.S."/>
            <person name="Howson R.W."/>
            <person name="Weissman J.S."/>
            <person name="O'Shea E.K."/>
        </authorList>
    </citation>
    <scope>SUBCELLULAR LOCATION [LARGE SCALE ANALYSIS]</scope>
</reference>
<reference key="22">
    <citation type="journal article" date="2003" name="Nature">
        <title>Global analysis of protein expression in yeast.</title>
        <authorList>
            <person name="Ghaemmaghami S."/>
            <person name="Huh W.-K."/>
            <person name="Bower K."/>
            <person name="Howson R.W."/>
            <person name="Belle A."/>
            <person name="Dephoure N."/>
            <person name="O'Shea E.K."/>
            <person name="Weissman J.S."/>
        </authorList>
    </citation>
    <scope>LEVEL OF PROTEIN EXPRESSION [LARGE SCALE ANALYSIS]</scope>
</reference>
<reference key="23">
    <citation type="journal article" date="2003" name="Nucleic Acids Res.">
        <title>Roles of Saccharomyces cerevisiae DNA polymerases Poleta and Polzeta in response to irradiation by simulated sunlight.</title>
        <authorList>
            <person name="Kozmin S.G."/>
            <person name="Pavlov Y.I."/>
            <person name="Kunkel T.A."/>
            <person name="Sage E."/>
        </authorList>
    </citation>
    <scope>FUNCTION</scope>
</reference>
<reference key="24">
    <citation type="journal article" date="2003" name="Proc. Natl. Acad. Sci. U.S.A.">
        <title>Yeast DNA polymerase eta makes functional contacts with the DNA minor groove only at the incoming nucleoside triphosphate.</title>
        <authorList>
            <person name="Washington M.T."/>
            <person name="Wolfle W.T."/>
            <person name="Spratt T.E."/>
            <person name="Prakash L."/>
            <person name="Prakash S."/>
        </authorList>
    </citation>
    <scope>FUNCTION</scope>
</reference>
<reference key="25">
    <citation type="journal article" date="2003" name="Proc. Natl. Acad. Sci. U.S.A.">
        <title>Mechanism of nucleotide incorporation opposite a thymine-thymine dimer by yeast DNA polymerase eta.</title>
        <authorList>
            <person name="Washington M.T."/>
            <person name="Prakash L."/>
            <person name="Prakash S."/>
        </authorList>
    </citation>
    <scope>FUNCTION</scope>
</reference>
<reference key="26">
    <citation type="journal article" date="2004" name="Biochemistry">
        <title>LC-MS/MS identification and yeast polymerase eta bypass of a novel gamma-irradiation-induced intrastrand cross-link lesion G[8-5]C.</title>
        <authorList>
            <person name="Gu C."/>
            <person name="Wang Y."/>
        </authorList>
    </citation>
    <scope>FUNCTION</scope>
</reference>
<reference key="27">
    <citation type="journal article" date="2004" name="Biochemistry">
        <title>Role of base stacking and sequence context in the inhibition of yeast DNA polymerase eta by pyrene nucleotide.</title>
        <authorList>
            <person name="Hwang H."/>
            <person name="Taylor J.-S."/>
        </authorList>
    </citation>
    <scope>FUNCTION</scope>
</reference>
<reference key="28">
    <citation type="journal article" date="2004" name="Nucleic Acids Res.">
        <title>Role of DNA polymerase eta in the bypass of abasic sites in yeast cells.</title>
        <authorList>
            <person name="Zhao B."/>
            <person name="Xie Z."/>
            <person name="Shen H."/>
            <person name="Wang Z."/>
        </authorList>
    </citation>
    <scope>FUNCTION</scope>
</reference>
<reference key="29">
    <citation type="journal article" date="2004" name="Nucleic Acids Res.">
        <title>Enzymatic switching for efficient and accurate translesion DNA replication.</title>
        <authorList>
            <person name="McCulloch S.D."/>
            <person name="Kokoska R.J."/>
            <person name="Chilkova O."/>
            <person name="Welch C.M."/>
            <person name="Johansson E."/>
            <person name="Burgers P.M.J."/>
            <person name="Kunkel T.A."/>
        </authorList>
    </citation>
    <scope>FUNCTION</scope>
</reference>
<reference key="30">
    <citation type="journal article" date="2004" name="Mol. Cell. Biol.">
        <title>Palm mutants in DNA polymerases alpha and eta alter DNA replication fidelity and translesion activity.</title>
        <authorList>
            <person name="Niimi A."/>
            <person name="Limsirichaikul S."/>
            <person name="Yoshida S."/>
            <person name="Iwai S."/>
            <person name="Masutani C."/>
            <person name="Hanaoka F."/>
            <person name="Kool E.T."/>
            <person name="Nishiyama Y."/>
            <person name="Suzuki M."/>
        </authorList>
    </citation>
    <scope>FUNCTION</scope>
    <scope>MUTAGENESIS OF PHE-34</scope>
</reference>
<reference key="31">
    <citation type="journal article" date="2005" name="Biochemistry">
        <title>Evidence for Watson-Crick and not Hoogsteen or wobble base pairing in the selection of nucleotides for insertion opposite pyrimidines and a thymine dimer by yeast DNA pol eta.</title>
        <authorList>
            <person name="Hwang H."/>
            <person name="Taylor J.-S."/>
        </authorList>
    </citation>
    <scope>FUNCTION</scope>
</reference>
<reference key="32">
    <citation type="journal article" date="2005" name="DNA Repair">
        <title>Transcript copy number of genes for DNA repair and translesion synthesis in yeast: contribution of transcription rate and mRNA stability to the steady-state level of each mRNA along with growth in glucose-fermentative medium.</title>
        <authorList>
            <person name="Michan C."/>
            <person name="Monje-Casas F."/>
            <person name="Pueyo C."/>
        </authorList>
    </citation>
    <scope>INDUCTION</scope>
</reference>
<reference key="33">
    <citation type="journal article" date="2005" name="DNA Repair">
        <title>The p-benzoquinone DNA adducts derived from benzene are highly mutagenic.</title>
        <authorList>
            <person name="Xie Z."/>
            <person name="Zhang Y."/>
            <person name="Guliaev A.B."/>
            <person name="Shen H."/>
            <person name="Hang B."/>
            <person name="Singer B."/>
            <person name="Wang Z."/>
        </authorList>
    </citation>
    <scope>FUNCTION</scope>
</reference>
<reference key="34">
    <citation type="journal article" date="2005" name="Genetics">
        <title>The relative roles in vivo of Saccharomyces cerevisiae Pol eta, Pol zeta, Rev1 protein and Pol32 in the bypass and mutation induction of an abasic site, T-T (6-4) photoadduct and T-T cis-syn cyclobutane dimer.</title>
        <authorList>
            <person name="Gibbs P.E.M."/>
            <person name="McDonald J.P."/>
            <person name="Woodgate R."/>
            <person name="Lawrence C.W."/>
        </authorList>
    </citation>
    <scope>FUNCTION</scope>
</reference>
<reference key="35">
    <citation type="journal article" date="2005" name="J. Am. Chem. Soc.">
        <title>Base pairing and replicative processing of the formamidopyrimidine-dG DNA lesion.</title>
        <authorList>
            <person name="Ober M."/>
            <person name="Mueller H."/>
            <person name="Pieck C."/>
            <person name="Gierlich J."/>
            <person name="Carell T."/>
        </authorList>
    </citation>
    <scope>FUNCTION</scope>
</reference>
<reference key="36">
    <citation type="journal article" date="2005" name="Mol. Cell. Biol.">
        <title>Mechanism of efficient and accurate nucleotide incorporation opposite 7,8-dihydro-8-oxoguanine by Saccharomyces cerevisiae DNA polymerase eta.</title>
        <authorList>
            <person name="Carlson K.D."/>
            <person name="Washington M.T."/>
        </authorList>
    </citation>
    <scope>FUNCTION</scope>
</reference>
<reference key="37">
    <citation type="journal article" date="2006" name="Biochemistry">
        <title>DNA synthesis past a 5-methylC-containing cis-syn-cyclobutane pyrimidine dimer by yeast pol eta is highly nonmutagenic.</title>
        <authorList>
            <person name="Vu B."/>
            <person name="Cannistraro V.J."/>
            <person name="Sun L."/>
            <person name="Taylor J.-S."/>
        </authorList>
    </citation>
    <scope>FUNCTION</scope>
</reference>
<reference key="38">
    <citation type="journal article" date="2006" name="Genetics">
        <title>The in vivo characterization of translesion synthesis across UV-induced lesions in Saccharomyces cerevisiae: insights into Pol zeta- and Pol eta-dependent frameshift mutagenesis.</title>
        <authorList>
            <person name="Abdulovic A.L."/>
            <person name="Jinks-Robertson S."/>
        </authorList>
    </citation>
    <scope>FUNCTION</scope>
</reference>
<reference key="39">
    <citation type="journal article" date="2006" name="Nucleic Acids Res.">
        <title>Poleta, Polzeta and Rev1 together are required for G to T transversion mutations induced by the (+)- and (-)-trans-anti-BPDE-N2-dG DNA adducts in yeast cells.</title>
        <authorList>
            <person name="Zhao B."/>
            <person name="Wang J."/>
            <person name="Geacintov N.E."/>
            <person name="Wang Z."/>
        </authorList>
    </citation>
    <scope>FUNCTION</scope>
</reference>
<reference key="40">
    <citation type="journal article" date="2001" name="Mol. Cell">
        <title>Structure of the catalytic core of S. cerevisiae DNA polymerase eta: implications for translesion DNA synthesis.</title>
        <authorList>
            <person name="Trincao J."/>
            <person name="Johnson R.E."/>
            <person name="Escalante C.R."/>
            <person name="Prakash S."/>
            <person name="Prakash L."/>
            <person name="Aggarwal A.K."/>
        </authorList>
    </citation>
    <scope>X-RAY CRYSTALLOGRAPHY (2.25 ANGSTROMS) OF 1-531</scope>
</reference>
<protein>
    <recommendedName>
        <fullName>DNA polymerase eta</fullName>
        <ecNumber>2.7.7.7</ecNumber>
    </recommendedName>
    <alternativeName>
        <fullName>Radiation-sensitive protein 30</fullName>
    </alternativeName>
</protein>
<organism>
    <name type="scientific">Saccharomyces cerevisiae (strain ATCC 204508 / S288c)</name>
    <name type="common">Baker's yeast</name>
    <dbReference type="NCBI Taxonomy" id="559292"/>
    <lineage>
        <taxon>Eukaryota</taxon>
        <taxon>Fungi</taxon>
        <taxon>Dikarya</taxon>
        <taxon>Ascomycota</taxon>
        <taxon>Saccharomycotina</taxon>
        <taxon>Saccharomycetes</taxon>
        <taxon>Saccharomycetales</taxon>
        <taxon>Saccharomycetaceae</taxon>
        <taxon>Saccharomyces</taxon>
    </lineage>
</organism>
<comment type="function">
    <text evidence="4 5 6 7 8 9 10 11 12 13 14 15 16 17 18 19 20 21 22 25 26 27 28 29 30 32 33 34 35 36 37 38 39 40">DNA polymerase specifically involved in DNA repair. Plays an important role in translesion synthesis, where the normal high fidelity DNA polymerases cannot proceed and DNA synthesis stalls. Plays an important role in the repair of UV-induced pyrimidine dimers. Depending on the context, it inserts the correct base, but causes frequent base transitions and transversions. Efficiently incorporates nucleotides opposite to other UV or oxidative DNA damages like O(6)-methylguanine, 7,8-dihydro-8-oxoguanine, 2,6-diamino-4-hydroxy-5-formamidopyrimidine of 2'-deoxyguanosine (FaPydG), or p-benzoquinone DNA adducts.</text>
</comment>
<comment type="catalytic activity">
    <reaction>
        <text>DNA(n) + a 2'-deoxyribonucleoside 5'-triphosphate = DNA(n+1) + diphosphate</text>
        <dbReference type="Rhea" id="RHEA:22508"/>
        <dbReference type="Rhea" id="RHEA-COMP:17339"/>
        <dbReference type="Rhea" id="RHEA-COMP:17340"/>
        <dbReference type="ChEBI" id="CHEBI:33019"/>
        <dbReference type="ChEBI" id="CHEBI:61560"/>
        <dbReference type="ChEBI" id="CHEBI:173112"/>
        <dbReference type="EC" id="2.7.7.7"/>
    </reaction>
</comment>
<comment type="subunit">
    <text evidence="15">Interacts with POL30. This interaction is essential for the polymerase eta function.</text>
</comment>
<comment type="interaction">
    <interactant intactId="EBI-36214">
        <id>Q04049</id>
    </interactant>
    <interactant intactId="EBI-12993">
        <id>P15873</id>
        <label>POL30</label>
    </interactant>
    <organismsDiffer>false</organismsDiffer>
    <experiments>7</experiments>
</comment>
<comment type="subcellular location">
    <subcellularLocation>
        <location evidence="23">Nucleus</location>
    </subcellularLocation>
</comment>
<comment type="induction">
    <text evidence="31 39">By UV radiation and heat shock. The mRNA is stabilized during stationary phase.</text>
</comment>
<comment type="miscellaneous">
    <text evidence="24">Present with 1860 molecules/cell in log phase SD medium.</text>
</comment>
<comment type="similarity">
    <text evidence="41">Belongs to the DNA polymerase type-Y family.</text>
</comment>
<proteinExistence type="evidence at protein level"/>
<accession>Q04049</accession>
<accession>D6VT49</accession>
<dbReference type="EC" id="2.7.7.7"/>
<dbReference type="EMBL" id="U33007">
    <property type="protein sequence ID" value="AAB64856.1"/>
    <property type="molecule type" value="Genomic_DNA"/>
</dbReference>
<dbReference type="EMBL" id="BK006938">
    <property type="protein sequence ID" value="DAA12259.1"/>
    <property type="molecule type" value="Genomic_DNA"/>
</dbReference>
<dbReference type="PIR" id="S69702">
    <property type="entry name" value="S69702"/>
</dbReference>
<dbReference type="RefSeq" id="NP_010707.3">
    <property type="nucleotide sequence ID" value="NM_001180727.3"/>
</dbReference>
<dbReference type="PDB" id="1JIH">
    <property type="method" value="X-ray"/>
    <property type="resolution" value="2.25 A"/>
    <property type="chains" value="A/B=1-513"/>
</dbReference>
<dbReference type="PDB" id="2R8J">
    <property type="method" value="X-ray"/>
    <property type="resolution" value="3.10 A"/>
    <property type="chains" value="A/B=1-531"/>
</dbReference>
<dbReference type="PDB" id="2R8K">
    <property type="method" value="X-ray"/>
    <property type="resolution" value="3.30 A"/>
    <property type="chains" value="A/B=1-531"/>
</dbReference>
<dbReference type="PDB" id="2WTF">
    <property type="method" value="X-ray"/>
    <property type="resolution" value="2.50 A"/>
    <property type="chains" value="A/B=1-513"/>
</dbReference>
<dbReference type="PDB" id="2XGP">
    <property type="method" value="X-ray"/>
    <property type="resolution" value="2.70 A"/>
    <property type="chains" value="A/B=1-513"/>
</dbReference>
<dbReference type="PDB" id="2XGQ">
    <property type="method" value="X-ray"/>
    <property type="resolution" value="2.70 A"/>
    <property type="chains" value="A/B=1-513"/>
</dbReference>
<dbReference type="PDB" id="3MFH">
    <property type="method" value="X-ray"/>
    <property type="resolution" value="2.00 A"/>
    <property type="chains" value="A=1-513"/>
</dbReference>
<dbReference type="PDB" id="3MFI">
    <property type="method" value="X-ray"/>
    <property type="resolution" value="1.76 A"/>
    <property type="chains" value="A=1-513"/>
</dbReference>
<dbReference type="PDB" id="3OHA">
    <property type="method" value="X-ray"/>
    <property type="resolution" value="2.00 A"/>
    <property type="chains" value="A=1-513"/>
</dbReference>
<dbReference type="PDB" id="3OHB">
    <property type="method" value="X-ray"/>
    <property type="resolution" value="2.00 A"/>
    <property type="chains" value="A=1-513"/>
</dbReference>
<dbReference type="PDB" id="5VTP">
    <property type="method" value="X-ray"/>
    <property type="resolution" value="2.80 A"/>
    <property type="chains" value="A=1-528"/>
</dbReference>
<dbReference type="PDBsum" id="1JIH"/>
<dbReference type="PDBsum" id="2R8J"/>
<dbReference type="PDBsum" id="2R8K"/>
<dbReference type="PDBsum" id="2WTF"/>
<dbReference type="PDBsum" id="2XGP"/>
<dbReference type="PDBsum" id="2XGQ"/>
<dbReference type="PDBsum" id="3MFH"/>
<dbReference type="PDBsum" id="3MFI"/>
<dbReference type="PDBsum" id="3OHA"/>
<dbReference type="PDBsum" id="3OHB"/>
<dbReference type="PDBsum" id="5VTP"/>
<dbReference type="SMR" id="Q04049"/>
<dbReference type="BioGRID" id="32477">
    <property type="interactions" value="158"/>
</dbReference>
<dbReference type="DIP" id="DIP-6500N"/>
<dbReference type="FunCoup" id="Q04049">
    <property type="interactions" value="692"/>
</dbReference>
<dbReference type="IntAct" id="Q04049">
    <property type="interactions" value="20"/>
</dbReference>
<dbReference type="MINT" id="Q04049"/>
<dbReference type="STRING" id="4932.YDR419W"/>
<dbReference type="GlyGen" id="Q04049">
    <property type="glycosylation" value="3 sites, 1 O-linked glycan (3 sites)"/>
</dbReference>
<dbReference type="iPTMnet" id="Q04049"/>
<dbReference type="PaxDb" id="4932-YDR419W"/>
<dbReference type="PeptideAtlas" id="Q04049"/>
<dbReference type="EnsemblFungi" id="YDR419W_mRNA">
    <property type="protein sequence ID" value="YDR419W"/>
    <property type="gene ID" value="YDR419W"/>
</dbReference>
<dbReference type="GeneID" id="852028"/>
<dbReference type="KEGG" id="sce:YDR419W"/>
<dbReference type="AGR" id="SGD:S000002827"/>
<dbReference type="SGD" id="S000002827">
    <property type="gene designation" value="RAD30"/>
</dbReference>
<dbReference type="VEuPathDB" id="FungiDB:YDR419W"/>
<dbReference type="eggNOG" id="KOG2095">
    <property type="taxonomic scope" value="Eukaryota"/>
</dbReference>
<dbReference type="GeneTree" id="ENSGT00940000157048"/>
<dbReference type="HOGENOM" id="CLU_012348_7_3_1"/>
<dbReference type="InParanoid" id="Q04049"/>
<dbReference type="OMA" id="QVEQIRC"/>
<dbReference type="OrthoDB" id="5723at2759"/>
<dbReference type="BioCyc" id="YEAST:G3O-29960-MONOMER"/>
<dbReference type="Reactome" id="R-SCE-110320">
    <property type="pathway name" value="Translesion Synthesis by POLH"/>
</dbReference>
<dbReference type="Reactome" id="R-SCE-5656169">
    <property type="pathway name" value="Termination of translesion DNA synthesis"/>
</dbReference>
<dbReference type="BioGRID-ORCS" id="852028">
    <property type="hits" value="0 hits in 10 CRISPR screens"/>
</dbReference>
<dbReference type="EvolutionaryTrace" id="Q04049"/>
<dbReference type="PRO" id="PR:Q04049"/>
<dbReference type="Proteomes" id="UP000002311">
    <property type="component" value="Chromosome IV"/>
</dbReference>
<dbReference type="RNAct" id="Q04049">
    <property type="molecule type" value="protein"/>
</dbReference>
<dbReference type="GO" id="GO:0005739">
    <property type="term" value="C:mitochondrion"/>
    <property type="evidence" value="ECO:0000314"/>
    <property type="project" value="SGD"/>
</dbReference>
<dbReference type="GO" id="GO:0005634">
    <property type="term" value="C:nucleus"/>
    <property type="evidence" value="ECO:0000314"/>
    <property type="project" value="SGD"/>
</dbReference>
<dbReference type="GO" id="GO:0005657">
    <property type="term" value="C:replication fork"/>
    <property type="evidence" value="ECO:0000353"/>
    <property type="project" value="SGD"/>
</dbReference>
<dbReference type="GO" id="GO:0035861">
    <property type="term" value="C:site of double-strand break"/>
    <property type="evidence" value="ECO:0000318"/>
    <property type="project" value="GO_Central"/>
</dbReference>
<dbReference type="GO" id="GO:0003684">
    <property type="term" value="F:damaged DNA binding"/>
    <property type="evidence" value="ECO:0007669"/>
    <property type="project" value="InterPro"/>
</dbReference>
<dbReference type="GO" id="GO:0003887">
    <property type="term" value="F:DNA-directed DNA polymerase activity"/>
    <property type="evidence" value="ECO:0000314"/>
    <property type="project" value="SGD"/>
</dbReference>
<dbReference type="GO" id="GO:0008270">
    <property type="term" value="F:zinc ion binding"/>
    <property type="evidence" value="ECO:0007669"/>
    <property type="project" value="UniProtKB-KW"/>
</dbReference>
<dbReference type="GO" id="GO:0007059">
    <property type="term" value="P:chromosome segregation"/>
    <property type="evidence" value="ECO:0000315"/>
    <property type="project" value="SGD"/>
</dbReference>
<dbReference type="GO" id="GO:0006260">
    <property type="term" value="P:DNA replication"/>
    <property type="evidence" value="ECO:0007669"/>
    <property type="project" value="UniProtKB-KW"/>
</dbReference>
<dbReference type="GO" id="GO:0070987">
    <property type="term" value="P:error-free translesion synthesis"/>
    <property type="evidence" value="ECO:0000314"/>
    <property type="project" value="SGD"/>
</dbReference>
<dbReference type="GO" id="GO:0042276">
    <property type="term" value="P:error-prone translesion synthesis"/>
    <property type="evidence" value="ECO:0000314"/>
    <property type="project" value="SGD"/>
</dbReference>
<dbReference type="GO" id="GO:0007064">
    <property type="term" value="P:mitotic sister chromatid cohesion"/>
    <property type="evidence" value="ECO:0000315"/>
    <property type="project" value="SGD"/>
</dbReference>
<dbReference type="GO" id="GO:0009314">
    <property type="term" value="P:response to radiation"/>
    <property type="evidence" value="ECO:0000318"/>
    <property type="project" value="GO_Central"/>
</dbReference>
<dbReference type="CDD" id="cd01702">
    <property type="entry name" value="PolY_Pol_eta"/>
    <property type="match status" value="1"/>
</dbReference>
<dbReference type="DisProt" id="DP02736"/>
<dbReference type="FunFam" id="1.10.150.20:FF:000123">
    <property type="entry name" value="DNA polymerase eta"/>
    <property type="match status" value="1"/>
</dbReference>
<dbReference type="FunFam" id="3.40.1170.60:FF:000008">
    <property type="entry name" value="DNA polymerase eta subunit"/>
    <property type="match status" value="1"/>
</dbReference>
<dbReference type="Gene3D" id="3.30.70.270">
    <property type="match status" value="1"/>
</dbReference>
<dbReference type="Gene3D" id="3.40.1170.60">
    <property type="match status" value="1"/>
</dbReference>
<dbReference type="Gene3D" id="1.10.150.20">
    <property type="entry name" value="5' to 3' exonuclease, C-terminal subdomain"/>
    <property type="match status" value="1"/>
</dbReference>
<dbReference type="Gene3D" id="3.30.1490.100">
    <property type="entry name" value="DNA polymerase, Y-family, little finger domain"/>
    <property type="match status" value="1"/>
</dbReference>
<dbReference type="InterPro" id="IPR043502">
    <property type="entry name" value="DNA/RNA_pol_sf"/>
</dbReference>
<dbReference type="InterPro" id="IPR036775">
    <property type="entry name" value="DNA_pol_Y-fam_lit_finger_sf"/>
</dbReference>
<dbReference type="InterPro" id="IPR017961">
    <property type="entry name" value="DNA_pol_Y-fam_little_finger"/>
</dbReference>
<dbReference type="InterPro" id="IPR052230">
    <property type="entry name" value="DNA_polymerase_eta"/>
</dbReference>
<dbReference type="InterPro" id="IPR043128">
    <property type="entry name" value="Rev_trsase/Diguanyl_cyclase"/>
</dbReference>
<dbReference type="InterPro" id="IPR041298">
    <property type="entry name" value="UBZ3"/>
</dbReference>
<dbReference type="InterPro" id="IPR001126">
    <property type="entry name" value="UmuC"/>
</dbReference>
<dbReference type="PANTHER" id="PTHR45873">
    <property type="entry name" value="DNA POLYMERASE ETA"/>
    <property type="match status" value="1"/>
</dbReference>
<dbReference type="PANTHER" id="PTHR45873:SF1">
    <property type="entry name" value="DNA POLYMERASE ETA"/>
    <property type="match status" value="1"/>
</dbReference>
<dbReference type="Pfam" id="PF00817">
    <property type="entry name" value="IMS"/>
    <property type="match status" value="1"/>
</dbReference>
<dbReference type="Pfam" id="PF11799">
    <property type="entry name" value="IMS_C"/>
    <property type="match status" value="1"/>
</dbReference>
<dbReference type="PIRSF" id="PIRSF036603">
    <property type="entry name" value="DPol_eta"/>
    <property type="match status" value="1"/>
</dbReference>
<dbReference type="SUPFAM" id="SSF56672">
    <property type="entry name" value="DNA/RNA polymerases"/>
    <property type="match status" value="1"/>
</dbReference>
<dbReference type="SUPFAM" id="SSF100879">
    <property type="entry name" value="Lesion bypass DNA polymerase (Y-family), little finger domain"/>
    <property type="match status" value="1"/>
</dbReference>
<dbReference type="PROSITE" id="PS50173">
    <property type="entry name" value="UMUC"/>
    <property type="match status" value="1"/>
</dbReference>
<dbReference type="PROSITE" id="PS51907">
    <property type="entry name" value="ZF_UBZ3"/>
    <property type="match status" value="1"/>
</dbReference>
<feature type="chain" id="PRO_0000268698" description="DNA polymerase eta">
    <location>
        <begin position="1"/>
        <end position="632"/>
    </location>
</feature>
<feature type="domain" description="UmuC" evidence="1">
    <location>
        <begin position="26"/>
        <end position="309"/>
    </location>
</feature>
<feature type="zinc finger region" description="UBZ3-type" evidence="2">
    <location>
        <begin position="545"/>
        <end position="580"/>
    </location>
</feature>
<feature type="region of interest" description="Disordered" evidence="3">
    <location>
        <begin position="598"/>
        <end position="632"/>
    </location>
</feature>
<feature type="region of interest" description="POL30-binding">
    <location>
        <begin position="625"/>
        <end position="632"/>
    </location>
</feature>
<feature type="compositionally biased region" description="Polar residues" evidence="3">
    <location>
        <begin position="607"/>
        <end position="626"/>
    </location>
</feature>
<feature type="binding site" evidence="1">
    <location>
        <position position="30"/>
    </location>
    <ligand>
        <name>Mg(2+)</name>
        <dbReference type="ChEBI" id="CHEBI:18420"/>
    </ligand>
</feature>
<feature type="binding site" evidence="1">
    <location>
        <position position="155"/>
    </location>
    <ligand>
        <name>Mg(2+)</name>
        <dbReference type="ChEBI" id="CHEBI:18420"/>
    </ligand>
</feature>
<feature type="binding site" evidence="2">
    <location>
        <position position="552"/>
    </location>
    <ligand>
        <name>Zn(2+)</name>
        <dbReference type="ChEBI" id="CHEBI:29105"/>
    </ligand>
</feature>
<feature type="binding site" evidence="2">
    <location>
        <position position="553"/>
    </location>
    <ligand>
        <name>Zn(2+)</name>
        <dbReference type="ChEBI" id="CHEBI:29105"/>
    </ligand>
</feature>
<feature type="binding site" evidence="2">
    <location>
        <position position="568"/>
    </location>
    <ligand>
        <name>Zn(2+)</name>
        <dbReference type="ChEBI" id="CHEBI:29105"/>
    </ligand>
</feature>
<feature type="binding site" evidence="2">
    <location>
        <position position="572"/>
    </location>
    <ligand>
        <name>Zn(2+)</name>
        <dbReference type="ChEBI" id="CHEBI:29105"/>
    </ligand>
</feature>
<feature type="mutagenesis site" description="Abolishes DNA polymerase activity." evidence="14">
    <original>D</original>
    <variation>A</variation>
    <location>
        <position position="30"/>
    </location>
</feature>
<feature type="mutagenesis site" description="Alters translesion activity." evidence="25">
    <original>F</original>
    <variation>L</variation>
    <location>
        <position position="34"/>
    </location>
</feature>
<feature type="mutagenesis site" description="Abolishes DNA polymerase activity." evidence="14">
    <original>E</original>
    <variation>A</variation>
    <location>
        <position position="39"/>
    </location>
</feature>
<feature type="mutagenesis site" description="Decreases efficiency of nucleotide incorporation." evidence="18">
    <original>Y</original>
    <variation>F</variation>
    <variation>A</variation>
    <location>
        <position position="64"/>
    </location>
</feature>
<feature type="mutagenesis site" description="Decreases efficiency of nucleotide incorporation." evidence="18">
    <original>R</original>
    <variation>A</variation>
    <location>
        <position position="67"/>
    </location>
</feature>
<feature type="mutagenesis site" description="Abolishes DNA polymerase activity and increases UV-induced mutations." evidence="14">
    <original>D</original>
    <variation>A</variation>
    <location>
        <position position="155"/>
    </location>
</feature>
<feature type="mutagenesis site" description="Decreases efficiency of nucleotide incorporation." evidence="14">
    <original>E</original>
    <variation>A</variation>
    <location>
        <position position="156"/>
    </location>
</feature>
<feature type="mutagenesis site" description="Decreases efficiency of nucleotide incorporation." evidence="18">
    <original>K</original>
    <variation>A</variation>
    <location>
        <position position="279"/>
    </location>
</feature>
<feature type="mutagenesis site" description="Abolishes POL30-binding; when associated with A-628.">
    <original>F</original>
    <variation>A</variation>
    <location>
        <position position="627"/>
    </location>
</feature>
<feature type="mutagenesis site" description="Abolishes POL30-binding; when associated with A-627.">
    <original>F</original>
    <variation>A</variation>
    <location>
        <position position="628"/>
    </location>
</feature>
<feature type="strand" evidence="46">
    <location>
        <begin position="1"/>
        <end position="5"/>
    </location>
</feature>
<feature type="helix" evidence="46">
    <location>
        <begin position="6"/>
        <end position="10"/>
    </location>
</feature>
<feature type="helix" evidence="46">
    <location>
        <begin position="11"/>
        <end position="13"/>
    </location>
</feature>
<feature type="turn" evidence="46">
    <location>
        <begin position="15"/>
        <end position="17"/>
    </location>
</feature>
<feature type="helix" evidence="46">
    <location>
        <begin position="18"/>
        <end position="20"/>
    </location>
</feature>
<feature type="strand" evidence="43">
    <location>
        <begin position="21"/>
        <end position="23"/>
    </location>
</feature>
<feature type="strand" evidence="46">
    <location>
        <begin position="26"/>
        <end position="31"/>
    </location>
</feature>
<feature type="helix" evidence="46">
    <location>
        <begin position="34"/>
        <end position="42"/>
    </location>
</feature>
<feature type="strand" evidence="46">
    <location>
        <begin position="51"/>
        <end position="55"/>
    </location>
</feature>
<feature type="strand" evidence="46">
    <location>
        <begin position="58"/>
        <end position="62"/>
    </location>
</feature>
<feature type="helix" evidence="46">
    <location>
        <begin position="64"/>
        <end position="67"/>
    </location>
</feature>
<feature type="turn" evidence="46">
    <location>
        <begin position="68"/>
        <end position="70"/>
    </location>
</feature>
<feature type="helix" evidence="46">
    <location>
        <begin position="77"/>
        <end position="81"/>
    </location>
</feature>
<feature type="strand" evidence="46">
    <location>
        <begin position="88"/>
        <end position="91"/>
    </location>
</feature>
<feature type="strand" evidence="46">
    <location>
        <begin position="93"/>
        <end position="96"/>
    </location>
</feature>
<feature type="strand" evidence="48">
    <location>
        <begin position="100"/>
        <end position="103"/>
    </location>
</feature>
<feature type="helix" evidence="47">
    <location>
        <begin position="115"/>
        <end position="117"/>
    </location>
</feature>
<feature type="strand" evidence="46">
    <location>
        <begin position="123"/>
        <end position="127"/>
    </location>
</feature>
<feature type="helix" evidence="46">
    <location>
        <begin position="129"/>
        <end position="145"/>
    </location>
</feature>
<feature type="strand" evidence="46">
    <location>
        <begin position="149"/>
        <end position="153"/>
    </location>
</feature>
<feature type="strand" evidence="46">
    <location>
        <begin position="156"/>
        <end position="160"/>
    </location>
</feature>
<feature type="helix" evidence="46">
    <location>
        <begin position="162"/>
        <end position="171"/>
    </location>
</feature>
<feature type="strand" evidence="46">
    <location>
        <begin position="176"/>
        <end position="178"/>
    </location>
</feature>
<feature type="helix" evidence="46">
    <location>
        <begin position="183"/>
        <end position="186"/>
    </location>
</feature>
<feature type="helix" evidence="46">
    <location>
        <begin position="188"/>
        <end position="196"/>
    </location>
</feature>
<feature type="strand" evidence="46">
    <location>
        <begin position="203"/>
        <end position="206"/>
    </location>
</feature>
<feature type="helix" evidence="46">
    <location>
        <begin position="210"/>
        <end position="214"/>
    </location>
</feature>
<feature type="strand" evidence="46">
    <location>
        <begin position="219"/>
        <end position="221"/>
    </location>
</feature>
<feature type="helix" evidence="46">
    <location>
        <begin position="233"/>
        <end position="256"/>
    </location>
</feature>
<feature type="strand" evidence="46">
    <location>
        <begin position="260"/>
        <end position="267"/>
    </location>
</feature>
<feature type="helix" evidence="46">
    <location>
        <begin position="268"/>
        <end position="275"/>
    </location>
</feature>
<feature type="turn" evidence="42">
    <location>
        <begin position="276"/>
        <end position="278"/>
    </location>
</feature>
<feature type="strand" evidence="46">
    <location>
        <begin position="280"/>
        <end position="285"/>
    </location>
</feature>
<feature type="helix" evidence="46">
    <location>
        <begin position="288"/>
        <end position="290"/>
    </location>
</feature>
<feature type="helix" evidence="46">
    <location>
        <begin position="291"/>
        <end position="295"/>
    </location>
</feature>
<feature type="strand" evidence="46">
    <location>
        <begin position="297"/>
        <end position="299"/>
    </location>
</feature>
<feature type="helix" evidence="46">
    <location>
        <begin position="302"/>
        <end position="304"/>
    </location>
</feature>
<feature type="helix" evidence="42">
    <location>
        <begin position="306"/>
        <end position="308"/>
    </location>
</feature>
<feature type="helix" evidence="46">
    <location>
        <begin position="311"/>
        <end position="319"/>
    </location>
</feature>
<feature type="strand" evidence="46">
    <location>
        <begin position="324"/>
        <end position="326"/>
    </location>
</feature>
<feature type="helix" evidence="46">
    <location>
        <begin position="327"/>
        <end position="334"/>
    </location>
</feature>
<feature type="helix" evidence="46">
    <location>
        <begin position="339"/>
        <end position="351"/>
    </location>
</feature>
<feature type="strand" evidence="44">
    <location>
        <begin position="352"/>
        <end position="355"/>
    </location>
</feature>
<feature type="turn" evidence="47">
    <location>
        <begin position="357"/>
        <end position="359"/>
    </location>
</feature>
<feature type="helix" evidence="45">
    <location>
        <begin position="364"/>
        <end position="366"/>
    </location>
</feature>
<feature type="helix" evidence="46">
    <location>
        <begin position="367"/>
        <end position="377"/>
    </location>
</feature>
<feature type="turn" evidence="46">
    <location>
        <begin position="378"/>
        <end position="380"/>
    </location>
</feature>
<feature type="strand" evidence="46">
    <location>
        <begin position="395"/>
        <end position="400"/>
    </location>
</feature>
<feature type="turn" evidence="46">
    <location>
        <begin position="403"/>
        <end position="406"/>
    </location>
</feature>
<feature type="helix" evidence="46">
    <location>
        <begin position="409"/>
        <end position="434"/>
    </location>
</feature>
<feature type="strand" evidence="46">
    <location>
        <begin position="436"/>
        <end position="448"/>
    </location>
</feature>
<feature type="strand" evidence="46">
    <location>
        <begin position="454"/>
        <end position="460"/>
    </location>
</feature>
<feature type="helix" evidence="46">
    <location>
        <begin position="466"/>
        <end position="468"/>
    </location>
</feature>
<feature type="helix" evidence="46">
    <location>
        <begin position="469"/>
        <end position="487"/>
    </location>
</feature>
<feature type="turn" evidence="46">
    <location>
        <begin position="488"/>
        <end position="490"/>
    </location>
</feature>
<feature type="strand" evidence="46">
    <location>
        <begin position="497"/>
        <end position="510"/>
    </location>
</feature>
<gene>
    <name type="primary">RAD30</name>
    <name type="synonym">DBH1</name>
    <name type="ordered locus">YDR419W</name>
</gene>